<feature type="transit peptide" description="Mitochondrion" evidence="2">
    <location>
        <begin position="1"/>
        <end position="24"/>
    </location>
</feature>
<feature type="chain" id="PRO_0000405511" description="Mitochondrial zinc maintenance protein 1, mitochondrial">
    <location>
        <begin position="25"/>
        <end position="123"/>
    </location>
</feature>
<organism>
    <name type="scientific">Saccharomyces cerevisiae (strain JAY291)</name>
    <name type="common">Baker's yeast</name>
    <dbReference type="NCBI Taxonomy" id="574961"/>
    <lineage>
        <taxon>Eukaryota</taxon>
        <taxon>Fungi</taxon>
        <taxon>Dikarya</taxon>
        <taxon>Ascomycota</taxon>
        <taxon>Saccharomycotina</taxon>
        <taxon>Saccharomycetes</taxon>
        <taxon>Saccharomycetales</taxon>
        <taxon>Saccharomycetaceae</taxon>
        <taxon>Saccharomyces</taxon>
    </lineage>
</organism>
<evidence type="ECO:0000250" key="1"/>
<evidence type="ECO:0000255" key="2"/>
<evidence type="ECO:0000305" key="3"/>
<accession>C7GKT0</accession>
<proteinExistence type="inferred from homology"/>
<reference key="1">
    <citation type="journal article" date="2009" name="Genome Res.">
        <title>Genome structure of a Saccharomyces cerevisiae strain widely used in bioethanol production.</title>
        <authorList>
            <person name="Argueso J.L."/>
            <person name="Carazzolle M.F."/>
            <person name="Mieczkowski P.A."/>
            <person name="Duarte F.M."/>
            <person name="Netto O.V.C."/>
            <person name="Missawa S.K."/>
            <person name="Galzerani F."/>
            <person name="Costa G.G.L."/>
            <person name="Vidal R.O."/>
            <person name="Noronha M.F."/>
            <person name="Dominska M."/>
            <person name="Andrietta M.G.S."/>
            <person name="Andrietta S.R."/>
            <person name="Cunha A.F."/>
            <person name="Gomes L.H."/>
            <person name="Tavares F.C.A."/>
            <person name="Alcarde A.R."/>
            <person name="Dietrich F.S."/>
            <person name="McCusker J.H."/>
            <person name="Petes T.D."/>
            <person name="Pereira G.A.G."/>
        </authorList>
    </citation>
    <scope>NUCLEOTIDE SEQUENCE [LARGE SCALE GENOMIC DNA]</scope>
    <source>
        <strain>JAY291</strain>
    </source>
</reference>
<gene>
    <name type="primary">MZM1</name>
    <name type="synonym">AIM8</name>
    <name type="synonym">FMP36</name>
    <name type="ORF">C1Q_00790</name>
</gene>
<sequence length="123" mass="13927">MSTRTKALNAYRHGLRATRIAFRNDAEVLLAARAKMRSGMLCPPDPKLTTEDQIQHLEDVAVFLRRNLVQGKKVDGSSTKEPRYHLNIHKDTELGDNETIADPTARVKTNLKARPFKCSDKKQ</sequence>
<dbReference type="EMBL" id="ACFL01000026">
    <property type="protein sequence ID" value="EEU08569.1"/>
    <property type="molecule type" value="Genomic_DNA"/>
</dbReference>
<dbReference type="SMR" id="C7GKT0"/>
<dbReference type="Proteomes" id="UP000008073">
    <property type="component" value="Unassembled WGS sequence"/>
</dbReference>
<dbReference type="GO" id="GO:0005759">
    <property type="term" value="C:mitochondrial matrix"/>
    <property type="evidence" value="ECO:0007669"/>
    <property type="project" value="UniProtKB-SubCell"/>
</dbReference>
<dbReference type="GO" id="GO:0044183">
    <property type="term" value="F:protein folding chaperone"/>
    <property type="evidence" value="ECO:0007669"/>
    <property type="project" value="TreeGrafter"/>
</dbReference>
<dbReference type="GO" id="GO:0034551">
    <property type="term" value="P:mitochondrial respiratory chain complex III assembly"/>
    <property type="evidence" value="ECO:0007669"/>
    <property type="project" value="InterPro"/>
</dbReference>
<dbReference type="CDD" id="cd20267">
    <property type="entry name" value="Complex1_LYR_LYRM7"/>
    <property type="match status" value="1"/>
</dbReference>
<dbReference type="InterPro" id="IPR045298">
    <property type="entry name" value="Complex1_LYR_LYRM7"/>
</dbReference>
<dbReference type="InterPro" id="IPR050435">
    <property type="entry name" value="MZM1/LYRM7"/>
</dbReference>
<dbReference type="PANTHER" id="PTHR46749">
    <property type="entry name" value="COMPLEX III ASSEMBLY FACTOR LYRM7"/>
    <property type="match status" value="1"/>
</dbReference>
<dbReference type="PANTHER" id="PTHR46749:SF1">
    <property type="entry name" value="COMPLEX III ASSEMBLY FACTOR LYRM7"/>
    <property type="match status" value="1"/>
</dbReference>
<keyword id="KW-0143">Chaperone</keyword>
<keyword id="KW-0496">Mitochondrion</keyword>
<keyword id="KW-0809">Transit peptide</keyword>
<name>MZM1_YEAS2</name>
<comment type="function">
    <text evidence="1">Assembly factor required for Rieske Fe-S protein RIP1 incorporation into the cytochrome b-c1 (CIII) complex. Functions as a chaperone, binding to this subunit within the mitochondrial matrix and stabilizing it prior to its translocation and insertion into the late CIII dimeric intermediate within the mitochondrial inner membrane. Modulates the mitochondrial matrix zinc pool (By similarity).</text>
</comment>
<comment type="subunit">
    <text evidence="1">Interacts with RIP1.</text>
</comment>
<comment type="subcellular location">
    <subcellularLocation>
        <location evidence="1">Mitochondrion matrix</location>
    </subcellularLocation>
</comment>
<comment type="similarity">
    <text evidence="3">Belongs to the complex I LYR family. MZM1 subfamily.</text>
</comment>
<protein>
    <recommendedName>
        <fullName>Mitochondrial zinc maintenance protein 1, mitochondrial</fullName>
    </recommendedName>
    <alternativeName>
        <fullName>Altered inheritance of mitochondria protein 8</fullName>
    </alternativeName>
    <alternativeName>
        <fullName>Found in mitochondrial proteome protein 36</fullName>
    </alternativeName>
</protein>